<name>KDKA_XYLF2</name>
<dbReference type="EC" id="2.7.1.166" evidence="1"/>
<dbReference type="EMBL" id="CP001011">
    <property type="protein sequence ID" value="ACB92713.1"/>
    <property type="molecule type" value="Genomic_DNA"/>
</dbReference>
<dbReference type="RefSeq" id="WP_004088627.1">
    <property type="nucleotide sequence ID" value="NC_010577.1"/>
</dbReference>
<dbReference type="KEGG" id="xfn:XfasM23_1292"/>
<dbReference type="HOGENOM" id="CLU_094226_0_0_6"/>
<dbReference type="UniPathway" id="UPA00958"/>
<dbReference type="Proteomes" id="UP000001698">
    <property type="component" value="Chromosome"/>
</dbReference>
<dbReference type="GO" id="GO:0005886">
    <property type="term" value="C:plasma membrane"/>
    <property type="evidence" value="ECO:0007669"/>
    <property type="project" value="UniProtKB-SubCell"/>
</dbReference>
<dbReference type="GO" id="GO:0005524">
    <property type="term" value="F:ATP binding"/>
    <property type="evidence" value="ECO:0007669"/>
    <property type="project" value="UniProtKB-UniRule"/>
</dbReference>
<dbReference type="GO" id="GO:0016301">
    <property type="term" value="F:kinase activity"/>
    <property type="evidence" value="ECO:0007669"/>
    <property type="project" value="UniProtKB-KW"/>
</dbReference>
<dbReference type="GO" id="GO:0016773">
    <property type="term" value="F:phosphotransferase activity, alcohol group as acceptor"/>
    <property type="evidence" value="ECO:0007669"/>
    <property type="project" value="UniProtKB-UniRule"/>
</dbReference>
<dbReference type="GO" id="GO:0009244">
    <property type="term" value="P:lipopolysaccharide core region biosynthetic process"/>
    <property type="evidence" value="ECO:0007669"/>
    <property type="project" value="UniProtKB-UniRule"/>
</dbReference>
<dbReference type="Gene3D" id="1.10.510.10">
    <property type="entry name" value="Transferase(Phosphotransferase) domain 1"/>
    <property type="match status" value="1"/>
</dbReference>
<dbReference type="HAMAP" id="MF_00521">
    <property type="entry name" value="KDO_kinase"/>
    <property type="match status" value="1"/>
</dbReference>
<dbReference type="InterPro" id="IPR022826">
    <property type="entry name" value="KDO_kinase"/>
</dbReference>
<dbReference type="InterPro" id="IPR011009">
    <property type="entry name" value="Kinase-like_dom_sf"/>
</dbReference>
<dbReference type="NCBIfam" id="NF002475">
    <property type="entry name" value="PRK01723.1"/>
    <property type="match status" value="1"/>
</dbReference>
<dbReference type="Pfam" id="PF06293">
    <property type="entry name" value="Kdo"/>
    <property type="match status" value="1"/>
</dbReference>
<dbReference type="SUPFAM" id="SSF56112">
    <property type="entry name" value="Protein kinase-like (PK-like)"/>
    <property type="match status" value="1"/>
</dbReference>
<comment type="function">
    <text evidence="1">Catalyzes the ATP-dependent phosphorylation of the 3-deoxy-D-manno-octulosonic acid (Kdo) residue in Kdo-lipid IV(A) at the 4-OH position.</text>
</comment>
<comment type="catalytic activity">
    <reaction evidence="1">
        <text>an alpha-Kdo-(2-&gt;6)-lipid IVA + ATP = a 4-O-phospho-alpha-Kdo-(2-&gt;6)-lipid IVA + ADP + H(+)</text>
        <dbReference type="Rhea" id="RHEA:74271"/>
        <dbReference type="ChEBI" id="CHEBI:15378"/>
        <dbReference type="ChEBI" id="CHEBI:30616"/>
        <dbReference type="ChEBI" id="CHEBI:176428"/>
        <dbReference type="ChEBI" id="CHEBI:193140"/>
        <dbReference type="ChEBI" id="CHEBI:456216"/>
        <dbReference type="EC" id="2.7.1.166"/>
    </reaction>
</comment>
<comment type="pathway">
    <text evidence="1">Bacterial outer membrane biogenesis; LPS core biosynthesis.</text>
</comment>
<comment type="subcellular location">
    <subcellularLocation>
        <location evidence="1">Cell inner membrane</location>
        <topology evidence="1">Peripheral membrane protein</topology>
        <orientation evidence="1">Cytoplasmic side</orientation>
    </subcellularLocation>
</comment>
<comment type="similarity">
    <text evidence="1">Belongs to the protein kinase superfamily. KdkA/RfaP family.</text>
</comment>
<proteinExistence type="inferred from homology"/>
<sequence length="249" mass="28764">MVAFDANEILTPFCEGHREGAILFDCQRMRQVEYGLFVPAWWGERAHPISEGGRGSAWFVEASFGNAVLRQYRRGGMIAMLNRDRYFWCGGHRTRSVLEFRLMRELISRGLPVPTPLAACYVRHGVQYRAAILMERLEGVSSLAMCVRGNSKEIHWEQIGRMISRFHREGLDHADLNAHNILLDQAGQCWLIDFDRGALRIPATKWREHNLARLLRSLLKIRGERSVDAVYRDFERLCRAYDLAWGRGC</sequence>
<reference key="1">
    <citation type="journal article" date="2010" name="J. Bacteriol.">
        <title>Whole genome sequences of two Xylella fastidiosa strains (M12 and M23) causing almond leaf scorch disease in California.</title>
        <authorList>
            <person name="Chen J."/>
            <person name="Xie G."/>
            <person name="Han S."/>
            <person name="Chertkov O."/>
            <person name="Sims D."/>
            <person name="Civerolo E.L."/>
        </authorList>
    </citation>
    <scope>NUCLEOTIDE SEQUENCE [LARGE SCALE GENOMIC DNA]</scope>
    <source>
        <strain>M23</strain>
    </source>
</reference>
<protein>
    <recommendedName>
        <fullName evidence="1">3-deoxy-D-manno-octulosonic acid kinase</fullName>
        <shortName evidence="1">Kdo kinase</shortName>
        <ecNumber evidence="1">2.7.1.166</ecNumber>
    </recommendedName>
</protein>
<accession>B2I5R8</accession>
<feature type="chain" id="PRO_1000127647" description="3-deoxy-D-manno-octulosonic acid kinase">
    <location>
        <begin position="1"/>
        <end position="249"/>
    </location>
</feature>
<feature type="active site" evidence="1">
    <location>
        <position position="175"/>
    </location>
</feature>
<keyword id="KW-0067">ATP-binding</keyword>
<keyword id="KW-0997">Cell inner membrane</keyword>
<keyword id="KW-1003">Cell membrane</keyword>
<keyword id="KW-0418">Kinase</keyword>
<keyword id="KW-0448">Lipopolysaccharide biosynthesis</keyword>
<keyword id="KW-0472">Membrane</keyword>
<keyword id="KW-0547">Nucleotide-binding</keyword>
<keyword id="KW-0808">Transferase</keyword>
<organism>
    <name type="scientific">Xylella fastidiosa (strain M23)</name>
    <dbReference type="NCBI Taxonomy" id="405441"/>
    <lineage>
        <taxon>Bacteria</taxon>
        <taxon>Pseudomonadati</taxon>
        <taxon>Pseudomonadota</taxon>
        <taxon>Gammaproteobacteria</taxon>
        <taxon>Lysobacterales</taxon>
        <taxon>Lysobacteraceae</taxon>
        <taxon>Xylella</taxon>
    </lineage>
</organism>
<evidence type="ECO:0000255" key="1">
    <source>
        <dbReference type="HAMAP-Rule" id="MF_00521"/>
    </source>
</evidence>
<gene>
    <name evidence="1" type="primary">kdkA</name>
    <name type="ordered locus">XfasM23_1292</name>
</gene>